<accession>P06516</accession>
<sequence>MLAVSLRDHGFPSATVQIRPAFCVQSDVVGSGNPPRMNYCQNARTAMSAALQSSDDAFRTVSSPLATDLDLSSPLEFFLRHRLTVVEELWEVVLRQECGQELVDILTQLRDLTSPEGQAPEVGGEALVQVIETLELSDAIRAARAFALYFQLINIVEQHYEQTQYQLAYERSRLEPLPGPDESPEGLHTIEIPQHQLDPFAAVIPLNQDPATFQTLFPRLRQLNVPPQMIQELTDRLDIRLVFTAHPTEIVRHTIRDKQRRIAYLLRQLDELETGKNRGFRELEAQNIRQQLTEEIRLWWRTDELHQFKPTVLDEVDYALHYFQEVLFEAIPLLYQRFRLALQGTFPDLQPPRYNFCQFGSWVGSDRDGNPSVTSAVTWQTACYQRSLVLDRYITAVEHLRNVLSLSMHWSEVLPELLSSLEQESMLFPETYEQLAVRYRQEPYRLKLSYILERLHNTRDRNTRLQQQQEKDPTTPLPEYRDGTLYQAGTAFLEDLKLIQHNLKQTGLSCYELEKLICQVEIFGFNLVHLDIRQESSRHSDAINEICEYLQILPQPYNELSEAERTAWLVQELKTRRPLVPARMPFSESTREIIETLRMVKQLQEEFGEAACQTYIISMSRELSDLLEVLLLAKEVGLYDPVTGKSSLQVIPLFETVEDLQNAPRVMTALFELPFYTQLNPTQSEPLQEVMLGYSDSNKDSGFLSSNWEIHKAQKALGTVARDHRVKLRIFHGRGGSVGRGGGPAYEAILAQPGRTTDGRIKITEQGEVLASKYALPELALYNLETITTAVIQSSLLGSGFDDIEPWNQIMEELAARSRRHYRALVYEQPDLVDFFNQVTPIEEISKLQISSRPARRKTGKRDLGSLRAIPWVFSWTQSRFLLPSWYGVGTALQEFLQERPEQNLNLLRYFYEKWPFFRMVISKVEMTLAKVDLQIAHHYVHELANPEDQERFERVFSQIAAEFQLTCHLVLTITNHGRLLDGDPELQRSVQLRNGTIVPLGFLQVALLKRLRQYRQQTETTGLMRSRYSKGELLRGALLTINGIAAGMRNTG</sequence>
<evidence type="ECO:0000250" key="1"/>
<evidence type="ECO:0000256" key="2">
    <source>
        <dbReference type="SAM" id="MobiDB-lite"/>
    </source>
</evidence>
<evidence type="ECO:0000305" key="3"/>
<name>CAPP_SYNP6</name>
<keyword id="KW-0120">Carbon dioxide fixation</keyword>
<keyword id="KW-0456">Lyase</keyword>
<keyword id="KW-0460">Magnesium</keyword>
<protein>
    <recommendedName>
        <fullName>Phosphoenolpyruvate carboxylase</fullName>
        <shortName>PEPC</shortName>
        <shortName>PEPCase</shortName>
        <ecNumber>4.1.1.31</ecNumber>
    </recommendedName>
</protein>
<feature type="chain" id="PRO_0000166638" description="Phosphoenolpyruvate carboxylase">
    <location>
        <begin position="1"/>
        <end position="1053"/>
    </location>
</feature>
<feature type="region of interest" description="Disordered" evidence="2">
    <location>
        <begin position="461"/>
        <end position="480"/>
    </location>
</feature>
<feature type="compositionally biased region" description="Basic and acidic residues" evidence="2">
    <location>
        <begin position="461"/>
        <end position="473"/>
    </location>
</feature>
<feature type="active site" evidence="1">
    <location>
        <position position="246"/>
    </location>
</feature>
<feature type="active site" evidence="1">
    <location>
        <position position="699"/>
    </location>
</feature>
<organism>
    <name type="scientific">Synechococcus sp. (strain ATCC 27144 / PCC 6301 / SAUG 1402/1)</name>
    <name type="common">Anacystis nidulans</name>
    <dbReference type="NCBI Taxonomy" id="269084"/>
    <lineage>
        <taxon>Bacteria</taxon>
        <taxon>Bacillati</taxon>
        <taxon>Cyanobacteriota</taxon>
        <taxon>Cyanophyceae</taxon>
        <taxon>Synechococcales</taxon>
        <taxon>Synechococcaceae</taxon>
        <taxon>Synechococcus</taxon>
    </lineage>
</organism>
<reference key="1">
    <citation type="journal article" date="1985" name="Gene">
        <title>Nucleotide sequence of the phosphoenolpyruvate carboxylase gene of the cyanobacterium Anacystis nidulans.</title>
        <authorList>
            <person name="Katagiri F."/>
            <person name="Kodaki T."/>
            <person name="Fujita N."/>
            <person name="Izui K."/>
            <person name="Katsuki H."/>
        </authorList>
    </citation>
    <scope>NUCLEOTIDE SEQUENCE [GENOMIC DNA]</scope>
</reference>
<reference key="2">
    <citation type="journal article" date="2007" name="Photosyn. Res.">
        <title>Complete nucleotide sequence of the freshwater unicellular cyanobacterium Synechococcus elongatus PCC 6301 chromosome: gene content and organization.</title>
        <authorList>
            <person name="Sugita C."/>
            <person name="Ogata K."/>
            <person name="Shikata M."/>
            <person name="Jikuya H."/>
            <person name="Takano J."/>
            <person name="Furumichi M."/>
            <person name="Kanehisa M."/>
            <person name="Omata T."/>
            <person name="Sugiura M."/>
            <person name="Sugita M."/>
        </authorList>
    </citation>
    <scope>NUCLEOTIDE SEQUENCE [LARGE SCALE GENOMIC DNA]</scope>
    <source>
        <strain>ATCC 27144 / PCC 6301 / SAUG 1402/1</strain>
    </source>
</reference>
<gene>
    <name type="primary">ppc</name>
    <name type="ordered locus">syc1846_d</name>
</gene>
<dbReference type="EC" id="4.1.1.31"/>
<dbReference type="EMBL" id="M11198">
    <property type="protein sequence ID" value="AAA22052.1"/>
    <property type="molecule type" value="Genomic_DNA"/>
</dbReference>
<dbReference type="EMBL" id="AP008231">
    <property type="protein sequence ID" value="BAD80036.1"/>
    <property type="molecule type" value="Genomic_DNA"/>
</dbReference>
<dbReference type="PIR" id="A24517">
    <property type="entry name" value="QYYC"/>
</dbReference>
<dbReference type="SMR" id="P06516"/>
<dbReference type="KEGG" id="syc:syc1846_d"/>
<dbReference type="eggNOG" id="COG2352">
    <property type="taxonomic scope" value="Bacteria"/>
</dbReference>
<dbReference type="Proteomes" id="UP000001175">
    <property type="component" value="Chromosome"/>
</dbReference>
<dbReference type="GO" id="GO:0005829">
    <property type="term" value="C:cytosol"/>
    <property type="evidence" value="ECO:0007669"/>
    <property type="project" value="TreeGrafter"/>
</dbReference>
<dbReference type="GO" id="GO:0000287">
    <property type="term" value="F:magnesium ion binding"/>
    <property type="evidence" value="ECO:0007669"/>
    <property type="project" value="UniProtKB-UniRule"/>
</dbReference>
<dbReference type="GO" id="GO:0008964">
    <property type="term" value="F:phosphoenolpyruvate carboxylase activity"/>
    <property type="evidence" value="ECO:0007669"/>
    <property type="project" value="UniProtKB-UniRule"/>
</dbReference>
<dbReference type="GO" id="GO:0015977">
    <property type="term" value="P:carbon fixation"/>
    <property type="evidence" value="ECO:0007669"/>
    <property type="project" value="UniProtKB-UniRule"/>
</dbReference>
<dbReference type="GO" id="GO:0006107">
    <property type="term" value="P:oxaloacetate metabolic process"/>
    <property type="evidence" value="ECO:0007669"/>
    <property type="project" value="UniProtKB-UniRule"/>
</dbReference>
<dbReference type="GO" id="GO:0006099">
    <property type="term" value="P:tricarboxylic acid cycle"/>
    <property type="evidence" value="ECO:0007669"/>
    <property type="project" value="InterPro"/>
</dbReference>
<dbReference type="Gene3D" id="1.20.1440.90">
    <property type="entry name" value="Phosphoenolpyruvate/pyruvate domain"/>
    <property type="match status" value="1"/>
</dbReference>
<dbReference type="HAMAP" id="MF_00595">
    <property type="entry name" value="PEPcase_type1"/>
    <property type="match status" value="1"/>
</dbReference>
<dbReference type="InterPro" id="IPR021135">
    <property type="entry name" value="PEP_COase"/>
</dbReference>
<dbReference type="InterPro" id="IPR022805">
    <property type="entry name" value="PEP_COase_bac/pln-type"/>
</dbReference>
<dbReference type="InterPro" id="IPR018129">
    <property type="entry name" value="PEP_COase_Lys_AS"/>
</dbReference>
<dbReference type="InterPro" id="IPR033129">
    <property type="entry name" value="PEPCASE_His_AS"/>
</dbReference>
<dbReference type="InterPro" id="IPR015813">
    <property type="entry name" value="Pyrv/PenolPyrv_kinase-like_dom"/>
</dbReference>
<dbReference type="NCBIfam" id="NF000584">
    <property type="entry name" value="PRK00009.1"/>
    <property type="match status" value="1"/>
</dbReference>
<dbReference type="PANTHER" id="PTHR30523">
    <property type="entry name" value="PHOSPHOENOLPYRUVATE CARBOXYLASE"/>
    <property type="match status" value="1"/>
</dbReference>
<dbReference type="PANTHER" id="PTHR30523:SF6">
    <property type="entry name" value="PHOSPHOENOLPYRUVATE CARBOXYLASE"/>
    <property type="match status" value="1"/>
</dbReference>
<dbReference type="Pfam" id="PF00311">
    <property type="entry name" value="PEPcase"/>
    <property type="match status" value="1"/>
</dbReference>
<dbReference type="PRINTS" id="PR00150">
    <property type="entry name" value="PEPCARBXLASE"/>
</dbReference>
<dbReference type="SUPFAM" id="SSF51621">
    <property type="entry name" value="Phosphoenolpyruvate/pyruvate domain"/>
    <property type="match status" value="1"/>
</dbReference>
<dbReference type="PROSITE" id="PS00781">
    <property type="entry name" value="PEPCASE_1"/>
    <property type="match status" value="1"/>
</dbReference>
<dbReference type="PROSITE" id="PS00393">
    <property type="entry name" value="PEPCASE_2"/>
    <property type="match status" value="1"/>
</dbReference>
<comment type="function">
    <text evidence="1">Forms oxaloacetate, a four-carbon dicarboxylic acid source for the tricarboxylic acid cycle.</text>
</comment>
<comment type="catalytic activity">
    <reaction>
        <text>oxaloacetate + phosphate = phosphoenolpyruvate + hydrogencarbonate</text>
        <dbReference type="Rhea" id="RHEA:28370"/>
        <dbReference type="ChEBI" id="CHEBI:16452"/>
        <dbReference type="ChEBI" id="CHEBI:17544"/>
        <dbReference type="ChEBI" id="CHEBI:43474"/>
        <dbReference type="ChEBI" id="CHEBI:58702"/>
        <dbReference type="EC" id="4.1.1.31"/>
    </reaction>
</comment>
<comment type="cofactor">
    <cofactor evidence="1">
        <name>Mg(2+)</name>
        <dbReference type="ChEBI" id="CHEBI:18420"/>
    </cofactor>
</comment>
<comment type="similarity">
    <text evidence="3">Belongs to the PEPCase type 1 family.</text>
</comment>
<proteinExistence type="inferred from homology"/>